<name>Y1390_HAEIN</name>
<sequence>MCLGVPIKLSKLMKILFNLPQ</sequence>
<gene>
    <name type="ordered locus">HI_1390</name>
</gene>
<organism>
    <name type="scientific">Haemophilus influenzae (strain ATCC 51907 / DSM 11121 / KW20 / Rd)</name>
    <dbReference type="NCBI Taxonomy" id="71421"/>
    <lineage>
        <taxon>Bacteria</taxon>
        <taxon>Pseudomonadati</taxon>
        <taxon>Pseudomonadota</taxon>
        <taxon>Gammaproteobacteria</taxon>
        <taxon>Pasteurellales</taxon>
        <taxon>Pasteurellaceae</taxon>
        <taxon>Haemophilus</taxon>
    </lineage>
</organism>
<dbReference type="EMBL" id="L42023">
    <property type="protein sequence ID" value="AAC23037.1"/>
    <property type="molecule type" value="Genomic_DNA"/>
</dbReference>
<dbReference type="PIR" id="F64121">
    <property type="entry name" value="F64121"/>
</dbReference>
<dbReference type="STRING" id="71421.HI_1390"/>
<dbReference type="EnsemblBacteria" id="AAC23037">
    <property type="protein sequence ID" value="AAC23037"/>
    <property type="gene ID" value="HI_1390"/>
</dbReference>
<dbReference type="KEGG" id="hin:HI_1390"/>
<dbReference type="HOGENOM" id="CLU_3426529_0_0_6"/>
<dbReference type="Proteomes" id="UP000000579">
    <property type="component" value="Chromosome"/>
</dbReference>
<dbReference type="InterPro" id="IPR019812">
    <property type="entry name" value="Hydgase_assmbl_chp_CS"/>
</dbReference>
<dbReference type="PROSITE" id="PS01097">
    <property type="entry name" value="HUPF_HYPC"/>
    <property type="match status" value="1"/>
</dbReference>
<protein>
    <recommendedName>
        <fullName>Uncharacterized protein HI_1390</fullName>
    </recommendedName>
</protein>
<proteinExistence type="predicted"/>
<accession>P45194</accession>
<reference key="1">
    <citation type="journal article" date="1995" name="Science">
        <title>Whole-genome random sequencing and assembly of Haemophilus influenzae Rd.</title>
        <authorList>
            <person name="Fleischmann R.D."/>
            <person name="Adams M.D."/>
            <person name="White O."/>
            <person name="Clayton R.A."/>
            <person name="Kirkness E.F."/>
            <person name="Kerlavage A.R."/>
            <person name="Bult C.J."/>
            <person name="Tomb J.-F."/>
            <person name="Dougherty B.A."/>
            <person name="Merrick J.M."/>
            <person name="McKenney K."/>
            <person name="Sutton G.G."/>
            <person name="FitzHugh W."/>
            <person name="Fields C.A."/>
            <person name="Gocayne J.D."/>
            <person name="Scott J.D."/>
            <person name="Shirley R."/>
            <person name="Liu L.-I."/>
            <person name="Glodek A."/>
            <person name="Kelley J.M."/>
            <person name="Weidman J.F."/>
            <person name="Phillips C.A."/>
            <person name="Spriggs T."/>
            <person name="Hedblom E."/>
            <person name="Cotton M.D."/>
            <person name="Utterback T.R."/>
            <person name="Hanna M.C."/>
            <person name="Nguyen D.T."/>
            <person name="Saudek D.M."/>
            <person name="Brandon R.C."/>
            <person name="Fine L.D."/>
            <person name="Fritchman J.L."/>
            <person name="Fuhrmann J.L."/>
            <person name="Geoghagen N.S.M."/>
            <person name="Gnehm C.L."/>
            <person name="McDonald L.A."/>
            <person name="Small K.V."/>
            <person name="Fraser C.M."/>
            <person name="Smith H.O."/>
            <person name="Venter J.C."/>
        </authorList>
    </citation>
    <scope>NUCLEOTIDE SEQUENCE [LARGE SCALE GENOMIC DNA]</scope>
    <source>
        <strain>ATCC 51907 / DSM 11121 / KW20 / Rd</strain>
    </source>
</reference>
<feature type="chain" id="PRO_0000078036" description="Uncharacterized protein HI_1390">
    <location>
        <begin position="1"/>
        <end position="21"/>
    </location>
</feature>
<keyword id="KW-1185">Reference proteome</keyword>